<feature type="signal peptide" evidence="1">
    <location>
        <begin position="1"/>
        <end position="22"/>
    </location>
</feature>
<feature type="propeptide" id="PRO_0000392699" evidence="4">
    <location>
        <begin position="23"/>
        <end position="48"/>
    </location>
</feature>
<feature type="peptide" id="PRO_0000044472" description="Delta-conotoxin GmVIA" evidence="4">
    <location>
        <begin position="49"/>
        <end position="77"/>
    </location>
</feature>
<feature type="disulfide bond" evidence="4">
    <location>
        <begin position="52"/>
        <end position="67"/>
    </location>
</feature>
<feature type="disulfide bond" evidence="4">
    <location>
        <begin position="59"/>
        <end position="72"/>
    </location>
</feature>
<feature type="disulfide bond" evidence="4">
    <location>
        <begin position="66"/>
        <end position="76"/>
    </location>
</feature>
<proteinExistence type="evidence at protein level"/>
<dbReference type="EMBL" id="DJ379385">
    <property type="status" value="NOT_ANNOTATED_CDS"/>
    <property type="molecule type" value="Unassigned_DNA"/>
</dbReference>
<dbReference type="PIR" id="A55891">
    <property type="entry name" value="A55891"/>
</dbReference>
<dbReference type="SMR" id="Q9TWM7"/>
<dbReference type="ConoServer" id="1598">
    <property type="toxin name" value="GmVIA"/>
</dbReference>
<dbReference type="GO" id="GO:0005576">
    <property type="term" value="C:extracellular region"/>
    <property type="evidence" value="ECO:0007669"/>
    <property type="project" value="UniProtKB-SubCell"/>
</dbReference>
<dbReference type="GO" id="GO:0019871">
    <property type="term" value="F:sodium channel inhibitor activity"/>
    <property type="evidence" value="ECO:0007669"/>
    <property type="project" value="InterPro"/>
</dbReference>
<dbReference type="GO" id="GO:0090729">
    <property type="term" value="F:toxin activity"/>
    <property type="evidence" value="ECO:0007669"/>
    <property type="project" value="UniProtKB-KW"/>
</dbReference>
<dbReference type="InterPro" id="IPR004214">
    <property type="entry name" value="Conotoxin"/>
</dbReference>
<dbReference type="InterPro" id="IPR012322">
    <property type="entry name" value="Conotoxin_d-typ_CS"/>
</dbReference>
<dbReference type="Pfam" id="PF02950">
    <property type="entry name" value="Conotoxin"/>
    <property type="match status" value="1"/>
</dbReference>
<dbReference type="PROSITE" id="PS60005">
    <property type="entry name" value="DELTA_CONOTOXIN"/>
    <property type="match status" value="1"/>
</dbReference>
<organism>
    <name type="scientific">Conus gloriamaris</name>
    <name type="common">Glory-of-the-Sea cone</name>
    <dbReference type="NCBI Taxonomy" id="37336"/>
    <lineage>
        <taxon>Eukaryota</taxon>
        <taxon>Metazoa</taxon>
        <taxon>Spiralia</taxon>
        <taxon>Lophotrochozoa</taxon>
        <taxon>Mollusca</taxon>
        <taxon>Gastropoda</taxon>
        <taxon>Caenogastropoda</taxon>
        <taxon>Neogastropoda</taxon>
        <taxon>Conoidea</taxon>
        <taxon>Conidae</taxon>
        <taxon>Conus</taxon>
        <taxon>Cylinder</taxon>
    </lineage>
</organism>
<evidence type="ECO:0000255" key="1"/>
<evidence type="ECO:0000269" key="2">
    <source>
    </source>
</evidence>
<evidence type="ECO:0000269" key="3">
    <source>
    </source>
</evidence>
<evidence type="ECO:0000269" key="4">
    <source>
    </source>
</evidence>
<evidence type="ECO:0000303" key="5">
    <source>
    </source>
</evidence>
<evidence type="ECO:0000305" key="6"/>
<evidence type="ECO:0000305" key="7">
    <source>
    </source>
</evidence>
<sequence>MKLTCMMIVAVLFLTAWTFVTADDSGNGMEILFPKAGHEMENLEVSNRVKPCRKEGQLCDPIFQNCCRGWNCVLFCV</sequence>
<keyword id="KW-0903">Direct protein sequencing</keyword>
<keyword id="KW-1015">Disulfide bond</keyword>
<keyword id="KW-0872">Ion channel impairing toxin</keyword>
<keyword id="KW-0960">Knottin</keyword>
<keyword id="KW-0528">Neurotoxin</keyword>
<keyword id="KW-0964">Secreted</keyword>
<keyword id="KW-0732">Signal</keyword>
<keyword id="KW-0800">Toxin</keyword>
<keyword id="KW-0738">Voltage-gated sodium channel impairing toxin</keyword>
<protein>
    <recommendedName>
        <fullName evidence="5">Delta-conotoxin GmVIA</fullName>
    </recommendedName>
</protein>
<accession>Q9TWM7</accession>
<name>O16A_CONGL</name>
<comment type="function">
    <text evidence="3">Delta-conotoxins bind to site 6 of voltage-gated sodium channels (Nav) and inhibit the inactivation process. This toxin shows weak activity on rNav1.2/SCN2A (EC(50)=2.5 uM) and rNav1.4/SCN4A (EC(50)=4.8 uM) (PubMed:10627583). In vivo, injection of this peptide in the head region of garden snail induces retraction of the head and body into shell. This is followed by secretion of viscous green slime and a convulsive undulation into and out of the shell. No apparent biological activity was observed when a much greater dose of peptide was injected intraperitoneally into mice.</text>
</comment>
<comment type="subcellular location">
    <subcellularLocation>
        <location evidence="4">Secreted</location>
    </subcellularLocation>
</comment>
<comment type="tissue specificity">
    <text evidence="7">Expressed by the venom duct.</text>
</comment>
<comment type="domain">
    <text evidence="4">The presence of a 'disulfide through disulfide knot' structurally defines this protein as a knottin.</text>
</comment>
<comment type="domain">
    <text evidence="6">The cysteine framework is VI/VII (C-C-CC-C-C).</text>
</comment>
<comment type="mass spectrometry"/>
<comment type="miscellaneous">
    <text evidence="2">Negative results: does not show effect on hNav1.7/SCN9A.</text>
</comment>
<comment type="similarity">
    <text evidence="6">Belongs to the conotoxin O1 superfamily.</text>
</comment>
<reference key="1">
    <citation type="patent" date="2003-11-11" number="JP2003533178">
        <title>O-superfamily conotoxin peptides.</title>
        <authorList>
            <person name="Hillyard D.R."/>
            <person name="Mcintosh M.J."/>
            <person name="Jones R.M."/>
            <person name="Cartier E.G."/>
            <person name="Watkins M."/>
            <person name="Olivera B.M."/>
            <person name="Layer R.T."/>
        </authorList>
    </citation>
    <scope>NUCLEOTIDE SEQUENCE</scope>
</reference>
<reference key="2">
    <citation type="journal article" date="1994" name="Biochemistry">
        <title>Delta-conotoxin GmVIA, a novel peptide from the venom of Conus gloriamaris.</title>
        <authorList>
            <person name="Shon K.-J."/>
            <person name="Hasson A."/>
            <person name="Spira M.E."/>
            <person name="Cruz L.J."/>
            <person name="Gray W.R."/>
            <person name="Olivera B.M."/>
        </authorList>
    </citation>
    <scope>PROTEIN SEQUENCE OF 49-77</scope>
    <scope>DISULFIDE BOND</scope>
    <scope>SYNTHESIS OF 49-77</scope>
    <scope>MASS SPECTROMETRY</scope>
    <scope>SUBCELLULAR LOCATION</scope>
    <source>
        <tissue>Venom</tissue>
    </source>
</reference>
<reference key="3">
    <citation type="journal article" date="1995" name="J. Neurophysiol.">
        <title>Alterations of voltage-activated sodium current by a novel conotoxin from the venom of Conus gloriamaris.</title>
        <authorList>
            <person name="Hasson A."/>
            <person name="Shon K.-J."/>
            <person name="Olivera B.M."/>
            <person name="Spira M.E."/>
        </authorList>
    </citation>
    <scope>FUNCTION</scope>
</reference>
<reference key="4">
    <citation type="journal article" date="2000" name="J. Neurosci.">
        <title>Distinction among neuronal subtypes of voltage-activated sodium channels by mu-conotoxin PIIIA.</title>
        <authorList>
            <person name="Safo P."/>
            <person name="Rosenbaum T."/>
            <person name="Shcherbatko A."/>
            <person name="Choi D.-Y."/>
            <person name="Han E."/>
            <person name="Toledo-Aral J.J."/>
            <person name="Olivera B.M."/>
            <person name="Brehm P."/>
            <person name="Mandel G."/>
        </authorList>
    </citation>
    <scope>FUNCTION</scope>
</reference>